<sequence>MRVVVIDYNGGNLASAAQAARKAATRKGIEADVVISRDATDILNADRLILPGQGAFADCAQGLGPALRNMLETATANGTPFLGICVGMQLMCEYGLEHGRTEGLGWISGNIRRMDEAANASLRLPHMGWNTLDFTPGAHLLTDGLIPGNHGYFVHSYALHDGADSDLVATAQYGTQVPAIVARGNRCGTQFHVEKSQDVGLTILGNFLRWTS</sequence>
<accession>Q5FTN5</accession>
<keyword id="KW-0028">Amino-acid biosynthesis</keyword>
<keyword id="KW-0963">Cytoplasm</keyword>
<keyword id="KW-0315">Glutamine amidotransferase</keyword>
<keyword id="KW-0368">Histidine biosynthesis</keyword>
<keyword id="KW-0378">Hydrolase</keyword>
<keyword id="KW-0456">Lyase</keyword>
<keyword id="KW-1185">Reference proteome</keyword>
<feature type="chain" id="PRO_0000231725" description="Imidazole glycerol phosphate synthase subunit HisH">
    <location>
        <begin position="1"/>
        <end position="212"/>
    </location>
</feature>
<feature type="domain" description="Glutamine amidotransferase type-1" evidence="1">
    <location>
        <begin position="2"/>
        <end position="212"/>
    </location>
</feature>
<feature type="active site" description="Nucleophile" evidence="1">
    <location>
        <position position="85"/>
    </location>
</feature>
<feature type="active site" evidence="1">
    <location>
        <position position="192"/>
    </location>
</feature>
<feature type="active site" evidence="1">
    <location>
        <position position="194"/>
    </location>
</feature>
<organism>
    <name type="scientific">Gluconobacter oxydans (strain 621H)</name>
    <name type="common">Gluconobacter suboxydans</name>
    <dbReference type="NCBI Taxonomy" id="290633"/>
    <lineage>
        <taxon>Bacteria</taxon>
        <taxon>Pseudomonadati</taxon>
        <taxon>Pseudomonadota</taxon>
        <taxon>Alphaproteobacteria</taxon>
        <taxon>Acetobacterales</taxon>
        <taxon>Acetobacteraceae</taxon>
        <taxon>Gluconobacter</taxon>
    </lineage>
</organism>
<reference key="1">
    <citation type="journal article" date="2005" name="Nat. Biotechnol.">
        <title>Complete genome sequence of the acetic acid bacterium Gluconobacter oxydans.</title>
        <authorList>
            <person name="Prust C."/>
            <person name="Hoffmeister M."/>
            <person name="Liesegang H."/>
            <person name="Wiezer A."/>
            <person name="Fricke W.F."/>
            <person name="Ehrenreich A."/>
            <person name="Gottschalk G."/>
            <person name="Deppenmeier U."/>
        </authorList>
    </citation>
    <scope>NUCLEOTIDE SEQUENCE [LARGE SCALE GENOMIC DNA]</scope>
    <source>
        <strain>621H</strain>
    </source>
</reference>
<dbReference type="EC" id="4.3.2.10" evidence="1"/>
<dbReference type="EC" id="3.5.1.2" evidence="1"/>
<dbReference type="EMBL" id="CP000009">
    <property type="protein sequence ID" value="AAW60261.1"/>
    <property type="molecule type" value="Genomic_DNA"/>
</dbReference>
<dbReference type="RefSeq" id="WP_011252062.1">
    <property type="nucleotide sequence ID" value="NC_006677.1"/>
</dbReference>
<dbReference type="SMR" id="Q5FTN5"/>
<dbReference type="STRING" id="290633.GOX0481"/>
<dbReference type="KEGG" id="gox:GOX0481"/>
<dbReference type="eggNOG" id="COG0118">
    <property type="taxonomic scope" value="Bacteria"/>
</dbReference>
<dbReference type="HOGENOM" id="CLU_071837_2_2_5"/>
<dbReference type="UniPathway" id="UPA00031">
    <property type="reaction ID" value="UER00010"/>
</dbReference>
<dbReference type="Proteomes" id="UP000006375">
    <property type="component" value="Chromosome"/>
</dbReference>
<dbReference type="GO" id="GO:0005737">
    <property type="term" value="C:cytoplasm"/>
    <property type="evidence" value="ECO:0007669"/>
    <property type="project" value="UniProtKB-SubCell"/>
</dbReference>
<dbReference type="GO" id="GO:0004359">
    <property type="term" value="F:glutaminase activity"/>
    <property type="evidence" value="ECO:0007669"/>
    <property type="project" value="UniProtKB-EC"/>
</dbReference>
<dbReference type="GO" id="GO:0000107">
    <property type="term" value="F:imidazoleglycerol-phosphate synthase activity"/>
    <property type="evidence" value="ECO:0007669"/>
    <property type="project" value="UniProtKB-UniRule"/>
</dbReference>
<dbReference type="GO" id="GO:0016829">
    <property type="term" value="F:lyase activity"/>
    <property type="evidence" value="ECO:0007669"/>
    <property type="project" value="UniProtKB-KW"/>
</dbReference>
<dbReference type="GO" id="GO:0000105">
    <property type="term" value="P:L-histidine biosynthetic process"/>
    <property type="evidence" value="ECO:0007669"/>
    <property type="project" value="UniProtKB-UniRule"/>
</dbReference>
<dbReference type="CDD" id="cd01748">
    <property type="entry name" value="GATase1_IGP_Synthase"/>
    <property type="match status" value="1"/>
</dbReference>
<dbReference type="Gene3D" id="3.40.50.880">
    <property type="match status" value="1"/>
</dbReference>
<dbReference type="HAMAP" id="MF_00278">
    <property type="entry name" value="HisH"/>
    <property type="match status" value="1"/>
</dbReference>
<dbReference type="InterPro" id="IPR029062">
    <property type="entry name" value="Class_I_gatase-like"/>
</dbReference>
<dbReference type="InterPro" id="IPR017926">
    <property type="entry name" value="GATASE"/>
</dbReference>
<dbReference type="InterPro" id="IPR010139">
    <property type="entry name" value="Imidazole-glycPsynth_HisH"/>
</dbReference>
<dbReference type="NCBIfam" id="TIGR01855">
    <property type="entry name" value="IMP_synth_hisH"/>
    <property type="match status" value="1"/>
</dbReference>
<dbReference type="PANTHER" id="PTHR42701">
    <property type="entry name" value="IMIDAZOLE GLYCEROL PHOSPHATE SYNTHASE SUBUNIT HISH"/>
    <property type="match status" value="1"/>
</dbReference>
<dbReference type="PANTHER" id="PTHR42701:SF1">
    <property type="entry name" value="IMIDAZOLE GLYCEROL PHOSPHATE SYNTHASE SUBUNIT HISH"/>
    <property type="match status" value="1"/>
</dbReference>
<dbReference type="Pfam" id="PF00117">
    <property type="entry name" value="GATase"/>
    <property type="match status" value="1"/>
</dbReference>
<dbReference type="PIRSF" id="PIRSF000495">
    <property type="entry name" value="Amidotransf_hisH"/>
    <property type="match status" value="1"/>
</dbReference>
<dbReference type="SUPFAM" id="SSF52317">
    <property type="entry name" value="Class I glutamine amidotransferase-like"/>
    <property type="match status" value="1"/>
</dbReference>
<dbReference type="PROSITE" id="PS51273">
    <property type="entry name" value="GATASE_TYPE_1"/>
    <property type="match status" value="1"/>
</dbReference>
<gene>
    <name evidence="1" type="primary">hisH</name>
    <name type="ordered locus">GOX0481</name>
</gene>
<protein>
    <recommendedName>
        <fullName evidence="1">Imidazole glycerol phosphate synthase subunit HisH</fullName>
        <ecNumber evidence="1">4.3.2.10</ecNumber>
    </recommendedName>
    <alternativeName>
        <fullName evidence="1">IGP synthase glutaminase subunit</fullName>
        <ecNumber evidence="1">3.5.1.2</ecNumber>
    </alternativeName>
    <alternativeName>
        <fullName evidence="1">IGP synthase subunit HisH</fullName>
    </alternativeName>
    <alternativeName>
        <fullName evidence="1">ImGP synthase subunit HisH</fullName>
        <shortName evidence="1">IGPS subunit HisH</shortName>
    </alternativeName>
</protein>
<comment type="function">
    <text evidence="1">IGPS catalyzes the conversion of PRFAR and glutamine to IGP, AICAR and glutamate. The HisH subunit catalyzes the hydrolysis of glutamine to glutamate and ammonia as part of the synthesis of IGP and AICAR. The resulting ammonia molecule is channeled to the active site of HisF.</text>
</comment>
<comment type="catalytic activity">
    <reaction evidence="1">
        <text>5-[(5-phospho-1-deoxy-D-ribulos-1-ylimino)methylamino]-1-(5-phospho-beta-D-ribosyl)imidazole-4-carboxamide + L-glutamine = D-erythro-1-(imidazol-4-yl)glycerol 3-phosphate + 5-amino-1-(5-phospho-beta-D-ribosyl)imidazole-4-carboxamide + L-glutamate + H(+)</text>
        <dbReference type="Rhea" id="RHEA:24793"/>
        <dbReference type="ChEBI" id="CHEBI:15378"/>
        <dbReference type="ChEBI" id="CHEBI:29985"/>
        <dbReference type="ChEBI" id="CHEBI:58278"/>
        <dbReference type="ChEBI" id="CHEBI:58359"/>
        <dbReference type="ChEBI" id="CHEBI:58475"/>
        <dbReference type="ChEBI" id="CHEBI:58525"/>
        <dbReference type="EC" id="4.3.2.10"/>
    </reaction>
</comment>
<comment type="catalytic activity">
    <reaction evidence="1">
        <text>L-glutamine + H2O = L-glutamate + NH4(+)</text>
        <dbReference type="Rhea" id="RHEA:15889"/>
        <dbReference type="ChEBI" id="CHEBI:15377"/>
        <dbReference type="ChEBI" id="CHEBI:28938"/>
        <dbReference type="ChEBI" id="CHEBI:29985"/>
        <dbReference type="ChEBI" id="CHEBI:58359"/>
        <dbReference type="EC" id="3.5.1.2"/>
    </reaction>
</comment>
<comment type="pathway">
    <text evidence="1">Amino-acid biosynthesis; L-histidine biosynthesis; L-histidine from 5-phospho-alpha-D-ribose 1-diphosphate: step 5/9.</text>
</comment>
<comment type="subunit">
    <text evidence="1">Heterodimer of HisH and HisF.</text>
</comment>
<comment type="subcellular location">
    <subcellularLocation>
        <location evidence="1">Cytoplasm</location>
    </subcellularLocation>
</comment>
<evidence type="ECO:0000255" key="1">
    <source>
        <dbReference type="HAMAP-Rule" id="MF_00278"/>
    </source>
</evidence>
<proteinExistence type="inferred from homology"/>
<name>HIS5_GLUOX</name>